<protein>
    <recommendedName>
        <fullName evidence="1">Nucleoside diphosphate kinase</fullName>
        <shortName evidence="1">NDK</shortName>
        <shortName evidence="1">NDP kinase</shortName>
        <ecNumber evidence="1">2.7.4.6</ecNumber>
    </recommendedName>
    <alternativeName>
        <fullName evidence="1">Nucleoside-2-P kinase</fullName>
    </alternativeName>
</protein>
<proteinExistence type="inferred from homology"/>
<accession>B9JCT4</accession>
<reference key="1">
    <citation type="journal article" date="2009" name="J. Bacteriol.">
        <title>Genome sequences of three Agrobacterium biovars help elucidate the evolution of multichromosome genomes in bacteria.</title>
        <authorList>
            <person name="Slater S.C."/>
            <person name="Goldman B.S."/>
            <person name="Goodner B."/>
            <person name="Setubal J.C."/>
            <person name="Farrand S.K."/>
            <person name="Nester E.W."/>
            <person name="Burr T.J."/>
            <person name="Banta L."/>
            <person name="Dickerman A.W."/>
            <person name="Paulsen I."/>
            <person name="Otten L."/>
            <person name="Suen G."/>
            <person name="Welch R."/>
            <person name="Almeida N.F."/>
            <person name="Arnold F."/>
            <person name="Burton O.T."/>
            <person name="Du Z."/>
            <person name="Ewing A."/>
            <person name="Godsy E."/>
            <person name="Heisel S."/>
            <person name="Houmiel K.L."/>
            <person name="Jhaveri J."/>
            <person name="Lu J."/>
            <person name="Miller N.M."/>
            <person name="Norton S."/>
            <person name="Chen Q."/>
            <person name="Phoolcharoen W."/>
            <person name="Ohlin V."/>
            <person name="Ondrusek D."/>
            <person name="Pride N."/>
            <person name="Stricklin S.L."/>
            <person name="Sun J."/>
            <person name="Wheeler C."/>
            <person name="Wilson L."/>
            <person name="Zhu H."/>
            <person name="Wood D.W."/>
        </authorList>
    </citation>
    <scope>NUCLEOTIDE SEQUENCE [LARGE SCALE GENOMIC DNA]</scope>
    <source>
        <strain>K84 / ATCC BAA-868</strain>
    </source>
</reference>
<name>NDK_RHIR8</name>
<feature type="chain" id="PRO_1000135238" description="Nucleoside diphosphate kinase">
    <location>
        <begin position="1"/>
        <end position="140"/>
    </location>
</feature>
<feature type="active site" description="Pros-phosphohistidine intermediate" evidence="1">
    <location>
        <position position="117"/>
    </location>
</feature>
<feature type="binding site" evidence="1">
    <location>
        <position position="11"/>
    </location>
    <ligand>
        <name>ATP</name>
        <dbReference type="ChEBI" id="CHEBI:30616"/>
    </ligand>
</feature>
<feature type="binding site" evidence="1">
    <location>
        <position position="59"/>
    </location>
    <ligand>
        <name>ATP</name>
        <dbReference type="ChEBI" id="CHEBI:30616"/>
    </ligand>
</feature>
<feature type="binding site" evidence="1">
    <location>
        <position position="87"/>
    </location>
    <ligand>
        <name>ATP</name>
        <dbReference type="ChEBI" id="CHEBI:30616"/>
    </ligand>
</feature>
<feature type="binding site" evidence="1">
    <location>
        <position position="93"/>
    </location>
    <ligand>
        <name>ATP</name>
        <dbReference type="ChEBI" id="CHEBI:30616"/>
    </ligand>
</feature>
<feature type="binding site" evidence="1">
    <location>
        <position position="104"/>
    </location>
    <ligand>
        <name>ATP</name>
        <dbReference type="ChEBI" id="CHEBI:30616"/>
    </ligand>
</feature>
<feature type="binding site" evidence="1">
    <location>
        <position position="114"/>
    </location>
    <ligand>
        <name>ATP</name>
        <dbReference type="ChEBI" id="CHEBI:30616"/>
    </ligand>
</feature>
<evidence type="ECO:0000255" key="1">
    <source>
        <dbReference type="HAMAP-Rule" id="MF_00451"/>
    </source>
</evidence>
<comment type="function">
    <text evidence="1">Major role in the synthesis of nucleoside triphosphates other than ATP. The ATP gamma phosphate is transferred to the NDP beta phosphate via a ping-pong mechanism, using a phosphorylated active-site intermediate.</text>
</comment>
<comment type="catalytic activity">
    <reaction evidence="1">
        <text>a 2'-deoxyribonucleoside 5'-diphosphate + ATP = a 2'-deoxyribonucleoside 5'-triphosphate + ADP</text>
        <dbReference type="Rhea" id="RHEA:44640"/>
        <dbReference type="ChEBI" id="CHEBI:30616"/>
        <dbReference type="ChEBI" id="CHEBI:61560"/>
        <dbReference type="ChEBI" id="CHEBI:73316"/>
        <dbReference type="ChEBI" id="CHEBI:456216"/>
        <dbReference type="EC" id="2.7.4.6"/>
    </reaction>
</comment>
<comment type="catalytic activity">
    <reaction evidence="1">
        <text>a ribonucleoside 5'-diphosphate + ATP = a ribonucleoside 5'-triphosphate + ADP</text>
        <dbReference type="Rhea" id="RHEA:18113"/>
        <dbReference type="ChEBI" id="CHEBI:30616"/>
        <dbReference type="ChEBI" id="CHEBI:57930"/>
        <dbReference type="ChEBI" id="CHEBI:61557"/>
        <dbReference type="ChEBI" id="CHEBI:456216"/>
        <dbReference type="EC" id="2.7.4.6"/>
    </reaction>
</comment>
<comment type="cofactor">
    <cofactor evidence="1">
        <name>Mg(2+)</name>
        <dbReference type="ChEBI" id="CHEBI:18420"/>
    </cofactor>
</comment>
<comment type="subunit">
    <text evidence="1">Homotetramer.</text>
</comment>
<comment type="subcellular location">
    <subcellularLocation>
        <location evidence="1">Cytoplasm</location>
    </subcellularLocation>
</comment>
<comment type="similarity">
    <text evidence="1">Belongs to the NDK family.</text>
</comment>
<organism>
    <name type="scientific">Rhizobium rhizogenes (strain K84 / ATCC BAA-868)</name>
    <name type="common">Agrobacterium radiobacter</name>
    <dbReference type="NCBI Taxonomy" id="311403"/>
    <lineage>
        <taxon>Bacteria</taxon>
        <taxon>Pseudomonadati</taxon>
        <taxon>Pseudomonadota</taxon>
        <taxon>Alphaproteobacteria</taxon>
        <taxon>Hyphomicrobiales</taxon>
        <taxon>Rhizobiaceae</taxon>
        <taxon>Rhizobium/Agrobacterium group</taxon>
        <taxon>Rhizobium</taxon>
    </lineage>
</organism>
<sequence>MAIERTFSMIKPDATKRNLTGAITKIFEDNGLRVIASKRVWMSKREAEGFYAVHKERPFFGELVDGMTSGPTVVQVLEGEGAILKNREIMGATNPANAAEGTIRKIHALSIGENSVHGSDAPETAAVEIAYWFSETEIVG</sequence>
<dbReference type="EC" id="2.7.4.6" evidence="1"/>
<dbReference type="EMBL" id="CP000628">
    <property type="protein sequence ID" value="ACM26071.1"/>
    <property type="molecule type" value="Genomic_DNA"/>
</dbReference>
<dbReference type="RefSeq" id="WP_007702574.1">
    <property type="nucleotide sequence ID" value="NC_011985.1"/>
</dbReference>
<dbReference type="SMR" id="B9JCT4"/>
<dbReference type="STRING" id="311403.Arad_1702"/>
<dbReference type="GeneID" id="86847950"/>
<dbReference type="KEGG" id="ara:Arad_1702"/>
<dbReference type="eggNOG" id="COG0105">
    <property type="taxonomic scope" value="Bacteria"/>
</dbReference>
<dbReference type="HOGENOM" id="CLU_060216_8_1_5"/>
<dbReference type="Proteomes" id="UP000001600">
    <property type="component" value="Chromosome 1"/>
</dbReference>
<dbReference type="GO" id="GO:0005737">
    <property type="term" value="C:cytoplasm"/>
    <property type="evidence" value="ECO:0007669"/>
    <property type="project" value="UniProtKB-SubCell"/>
</dbReference>
<dbReference type="GO" id="GO:0005524">
    <property type="term" value="F:ATP binding"/>
    <property type="evidence" value="ECO:0007669"/>
    <property type="project" value="UniProtKB-UniRule"/>
</dbReference>
<dbReference type="GO" id="GO:0046872">
    <property type="term" value="F:metal ion binding"/>
    <property type="evidence" value="ECO:0007669"/>
    <property type="project" value="UniProtKB-KW"/>
</dbReference>
<dbReference type="GO" id="GO:0004550">
    <property type="term" value="F:nucleoside diphosphate kinase activity"/>
    <property type="evidence" value="ECO:0007669"/>
    <property type="project" value="UniProtKB-UniRule"/>
</dbReference>
<dbReference type="GO" id="GO:0006241">
    <property type="term" value="P:CTP biosynthetic process"/>
    <property type="evidence" value="ECO:0007669"/>
    <property type="project" value="UniProtKB-UniRule"/>
</dbReference>
<dbReference type="GO" id="GO:0006183">
    <property type="term" value="P:GTP biosynthetic process"/>
    <property type="evidence" value="ECO:0007669"/>
    <property type="project" value="UniProtKB-UniRule"/>
</dbReference>
<dbReference type="GO" id="GO:0006228">
    <property type="term" value="P:UTP biosynthetic process"/>
    <property type="evidence" value="ECO:0007669"/>
    <property type="project" value="UniProtKB-UniRule"/>
</dbReference>
<dbReference type="CDD" id="cd04413">
    <property type="entry name" value="NDPk_I"/>
    <property type="match status" value="1"/>
</dbReference>
<dbReference type="FunFam" id="3.30.70.141:FF:000039">
    <property type="entry name" value="Nucleoside diphosphate kinase B"/>
    <property type="match status" value="1"/>
</dbReference>
<dbReference type="Gene3D" id="3.30.70.141">
    <property type="entry name" value="Nucleoside diphosphate kinase-like domain"/>
    <property type="match status" value="1"/>
</dbReference>
<dbReference type="HAMAP" id="MF_00451">
    <property type="entry name" value="NDP_kinase"/>
    <property type="match status" value="1"/>
</dbReference>
<dbReference type="InterPro" id="IPR034907">
    <property type="entry name" value="NDK-like_dom"/>
</dbReference>
<dbReference type="InterPro" id="IPR036850">
    <property type="entry name" value="NDK-like_dom_sf"/>
</dbReference>
<dbReference type="InterPro" id="IPR001564">
    <property type="entry name" value="Nucleoside_diP_kinase"/>
</dbReference>
<dbReference type="InterPro" id="IPR023005">
    <property type="entry name" value="Nucleoside_diP_kinase_AS"/>
</dbReference>
<dbReference type="NCBIfam" id="NF001908">
    <property type="entry name" value="PRK00668.1"/>
    <property type="match status" value="1"/>
</dbReference>
<dbReference type="PANTHER" id="PTHR11349">
    <property type="entry name" value="NUCLEOSIDE DIPHOSPHATE KINASE"/>
    <property type="match status" value="1"/>
</dbReference>
<dbReference type="Pfam" id="PF00334">
    <property type="entry name" value="NDK"/>
    <property type="match status" value="1"/>
</dbReference>
<dbReference type="PRINTS" id="PR01243">
    <property type="entry name" value="NUCDPKINASE"/>
</dbReference>
<dbReference type="SMART" id="SM00562">
    <property type="entry name" value="NDK"/>
    <property type="match status" value="1"/>
</dbReference>
<dbReference type="SUPFAM" id="SSF54919">
    <property type="entry name" value="Nucleoside diphosphate kinase, NDK"/>
    <property type="match status" value="1"/>
</dbReference>
<dbReference type="PROSITE" id="PS00469">
    <property type="entry name" value="NDPK"/>
    <property type="match status" value="1"/>
</dbReference>
<dbReference type="PROSITE" id="PS51374">
    <property type="entry name" value="NDPK_LIKE"/>
    <property type="match status" value="1"/>
</dbReference>
<gene>
    <name evidence="1" type="primary">ndk</name>
    <name type="ordered locus">Arad_1702</name>
</gene>
<keyword id="KW-0067">ATP-binding</keyword>
<keyword id="KW-0963">Cytoplasm</keyword>
<keyword id="KW-0418">Kinase</keyword>
<keyword id="KW-0460">Magnesium</keyword>
<keyword id="KW-0479">Metal-binding</keyword>
<keyword id="KW-0546">Nucleotide metabolism</keyword>
<keyword id="KW-0547">Nucleotide-binding</keyword>
<keyword id="KW-0597">Phosphoprotein</keyword>
<keyword id="KW-0808">Transferase</keyword>